<reference key="1">
    <citation type="submission" date="2007-11" db="EMBL/GenBank/DDBJ databases">
        <authorList>
            <consortium name="The Salmonella enterica serovar Arizonae Genome Sequencing Project"/>
            <person name="McClelland M."/>
            <person name="Sanderson E.K."/>
            <person name="Porwollik S."/>
            <person name="Spieth J."/>
            <person name="Clifton W.S."/>
            <person name="Fulton R."/>
            <person name="Chunyan W."/>
            <person name="Wollam A."/>
            <person name="Shah N."/>
            <person name="Pepin K."/>
            <person name="Bhonagiri V."/>
            <person name="Nash W."/>
            <person name="Johnson M."/>
            <person name="Thiruvilangam P."/>
            <person name="Wilson R."/>
        </authorList>
    </citation>
    <scope>NUCLEOTIDE SEQUENCE [LARGE SCALE GENOMIC DNA]</scope>
    <source>
        <strain>ATCC BAA-731 / CDC346-86 / RSK2980</strain>
    </source>
</reference>
<keyword id="KW-0997">Cell inner membrane</keyword>
<keyword id="KW-1003">Cell membrane</keyword>
<keyword id="KW-0133">Cell shape</keyword>
<keyword id="KW-0238">DNA-binding</keyword>
<keyword id="KW-0472">Membrane</keyword>
<keyword id="KW-1185">Reference proteome</keyword>
<keyword id="KW-0735">Signal-anchor</keyword>
<keyword id="KW-0812">Transmembrane</keyword>
<keyword id="KW-1133">Transmembrane helix</keyword>
<comment type="function">
    <text evidence="1">Cytoskeletal protein that is involved in cell-shape control through regulation of the length of the long axis.</text>
</comment>
<comment type="subcellular location">
    <subcellularLocation>
        <location evidence="1">Cell inner membrane</location>
        <topology evidence="1">Single-pass type II membrane protein</topology>
    </subcellularLocation>
    <text evidence="1">Forms helical filaments along the long axis of the cell.</text>
</comment>
<comment type="domain">
    <text evidence="1">The helix-turn-helix (HTH) motif in the cytoplasmic domain of the N-terminus is involved in the formation of spirals to maintain the rigid rod shape. As this protein is anchored in the cytoplasmic membrane, the HTH motif may contribute to protein-protein interactions to form the RodZ helix, which is localized beneath the cytoplasmic membrane. The C-terminal domain may be critical for determination of the rod shape by probably interacting with enzymes required for synthesis of the peptidoglycan layer, including PBPs in the periplasm.</text>
</comment>
<comment type="similarity">
    <text evidence="1">Belongs to the RodZ family.</text>
</comment>
<feature type="chain" id="PRO_0000361848" description="Cytoskeleton protein RodZ">
    <location>
        <begin position="1"/>
        <end position="321"/>
    </location>
</feature>
<feature type="topological domain" description="Cytoplasmic" evidence="1">
    <location>
        <begin position="1"/>
        <end position="111"/>
    </location>
</feature>
<feature type="transmembrane region" description="Helical; Signal-anchor for type II membrane protein" evidence="1">
    <location>
        <begin position="112"/>
        <end position="132"/>
    </location>
</feature>
<feature type="topological domain" description="Periplasmic" evidence="1">
    <location>
        <begin position="133"/>
        <end position="321"/>
    </location>
</feature>
<feature type="domain" description="HTH cro/C1-type" evidence="1">
    <location>
        <begin position="19"/>
        <end position="71"/>
    </location>
</feature>
<feature type="DNA-binding region" description="H-T-H motif" evidence="1">
    <location>
        <begin position="30"/>
        <end position="49"/>
    </location>
</feature>
<feature type="region of interest" description="Disordered" evidence="2">
    <location>
        <begin position="167"/>
        <end position="190"/>
    </location>
</feature>
<feature type="compositionally biased region" description="Low complexity" evidence="2">
    <location>
        <begin position="176"/>
        <end position="190"/>
    </location>
</feature>
<dbReference type="EMBL" id="CP000880">
    <property type="protein sequence ID" value="ABX20292.1"/>
    <property type="molecule type" value="Genomic_DNA"/>
</dbReference>
<dbReference type="SMR" id="A9MHL4"/>
<dbReference type="STRING" id="41514.SARI_00354"/>
<dbReference type="KEGG" id="ses:SARI_00354"/>
<dbReference type="HOGENOM" id="CLU_047530_3_1_6"/>
<dbReference type="Proteomes" id="UP000002084">
    <property type="component" value="Chromosome"/>
</dbReference>
<dbReference type="GO" id="GO:0005886">
    <property type="term" value="C:plasma membrane"/>
    <property type="evidence" value="ECO:0007669"/>
    <property type="project" value="UniProtKB-SubCell"/>
</dbReference>
<dbReference type="GO" id="GO:0003677">
    <property type="term" value="F:DNA binding"/>
    <property type="evidence" value="ECO:0007669"/>
    <property type="project" value="UniProtKB-KW"/>
</dbReference>
<dbReference type="GO" id="GO:0008360">
    <property type="term" value="P:regulation of cell shape"/>
    <property type="evidence" value="ECO:0007669"/>
    <property type="project" value="UniProtKB-UniRule"/>
</dbReference>
<dbReference type="CDD" id="cd00093">
    <property type="entry name" value="HTH_XRE"/>
    <property type="match status" value="1"/>
</dbReference>
<dbReference type="FunFam" id="1.10.260.40:FF:000014">
    <property type="entry name" value="Cytoskeleton protein RodZ"/>
    <property type="match status" value="1"/>
</dbReference>
<dbReference type="Gene3D" id="1.10.260.40">
    <property type="entry name" value="lambda repressor-like DNA-binding domains"/>
    <property type="match status" value="1"/>
</dbReference>
<dbReference type="HAMAP" id="MF_02017">
    <property type="entry name" value="RodZ"/>
    <property type="match status" value="1"/>
</dbReference>
<dbReference type="InterPro" id="IPR050400">
    <property type="entry name" value="Bact_Cytoskel_RodZ"/>
</dbReference>
<dbReference type="InterPro" id="IPR001387">
    <property type="entry name" value="Cro/C1-type_HTH"/>
</dbReference>
<dbReference type="InterPro" id="IPR010982">
    <property type="entry name" value="Lambda_DNA-bd_dom_sf"/>
</dbReference>
<dbReference type="InterPro" id="IPR023690">
    <property type="entry name" value="RodZ"/>
</dbReference>
<dbReference type="InterPro" id="IPR025194">
    <property type="entry name" value="RodZ-like_C"/>
</dbReference>
<dbReference type="NCBIfam" id="NF008109">
    <property type="entry name" value="PRK10856.1"/>
    <property type="match status" value="1"/>
</dbReference>
<dbReference type="PANTHER" id="PTHR34475">
    <property type="match status" value="1"/>
</dbReference>
<dbReference type="PANTHER" id="PTHR34475:SF1">
    <property type="entry name" value="CYTOSKELETON PROTEIN RODZ"/>
    <property type="match status" value="1"/>
</dbReference>
<dbReference type="Pfam" id="PF13413">
    <property type="entry name" value="HTH_25"/>
    <property type="match status" value="1"/>
</dbReference>
<dbReference type="Pfam" id="PF13464">
    <property type="entry name" value="RodZ_C"/>
    <property type="match status" value="1"/>
</dbReference>
<dbReference type="SMART" id="SM00530">
    <property type="entry name" value="HTH_XRE"/>
    <property type="match status" value="1"/>
</dbReference>
<dbReference type="SUPFAM" id="SSF47413">
    <property type="entry name" value="lambda repressor-like DNA-binding domains"/>
    <property type="match status" value="1"/>
</dbReference>
<dbReference type="PROSITE" id="PS50943">
    <property type="entry name" value="HTH_CROC1"/>
    <property type="match status" value="1"/>
</dbReference>
<sequence length="321" mass="34580">MNTEATHDQNEAQTTGVRLRNAREQLGLSQQAVAERLCLKVSTVRDIEEDKAPSDLASTFLRGYIRSYARLVHVPEEELLPGLEKQAPLRAAKVAPMQNFSLGKRRKKRDGWLMSFTWLVLFVVVGLTGAWWWQNHKAQQEEITTMADQSTAELNADKDSGQGVQLDTRAAASQDTTPAETAPAAPVDSTAAATQNTVVAPSQANVDTAATSATATETSSALPTDQAGVAAPAADSNALVMNFTADCWLEVTDATGKKLFSGMQRKDGNLNLTGQAPYKLKIGAPAAVQIQYQGKPVDLSRFIRTNQVARLTINAEPTSAQ</sequence>
<organism>
    <name type="scientific">Salmonella arizonae (strain ATCC BAA-731 / CDC346-86 / RSK2980)</name>
    <dbReference type="NCBI Taxonomy" id="41514"/>
    <lineage>
        <taxon>Bacteria</taxon>
        <taxon>Pseudomonadati</taxon>
        <taxon>Pseudomonadota</taxon>
        <taxon>Gammaproteobacteria</taxon>
        <taxon>Enterobacterales</taxon>
        <taxon>Enterobacteriaceae</taxon>
        <taxon>Salmonella</taxon>
    </lineage>
</organism>
<gene>
    <name evidence="1" type="primary">rodZ</name>
    <name type="ordered locus">SARI_00354</name>
</gene>
<accession>A9MHL4</accession>
<evidence type="ECO:0000255" key="1">
    <source>
        <dbReference type="HAMAP-Rule" id="MF_02017"/>
    </source>
</evidence>
<evidence type="ECO:0000256" key="2">
    <source>
        <dbReference type="SAM" id="MobiDB-lite"/>
    </source>
</evidence>
<proteinExistence type="inferred from homology"/>
<protein>
    <recommendedName>
        <fullName evidence="1">Cytoskeleton protein RodZ</fullName>
    </recommendedName>
</protein>
<name>RODZ_SALAR</name>